<name>Y2205_BURP6</name>
<organism>
    <name type="scientific">Burkholderia pseudomallei (strain 668)</name>
    <dbReference type="NCBI Taxonomy" id="320373"/>
    <lineage>
        <taxon>Bacteria</taxon>
        <taxon>Pseudomonadati</taxon>
        <taxon>Pseudomonadota</taxon>
        <taxon>Betaproteobacteria</taxon>
        <taxon>Burkholderiales</taxon>
        <taxon>Burkholderiaceae</taxon>
        <taxon>Burkholderia</taxon>
        <taxon>pseudomallei group</taxon>
    </lineage>
</organism>
<proteinExistence type="inferred from homology"/>
<dbReference type="EMBL" id="CP000570">
    <property type="protein sequence ID" value="ABN83666.1"/>
    <property type="molecule type" value="Genomic_DNA"/>
</dbReference>
<dbReference type="RefSeq" id="WP_004192342.1">
    <property type="nucleotide sequence ID" value="NC_009074.1"/>
</dbReference>
<dbReference type="SMR" id="A3NA69"/>
<dbReference type="KEGG" id="bpd:BURPS668_2205"/>
<dbReference type="HOGENOM" id="CLU_140930_0_0_4"/>
<dbReference type="GO" id="GO:0043590">
    <property type="term" value="C:bacterial nucleoid"/>
    <property type="evidence" value="ECO:0007669"/>
    <property type="project" value="UniProtKB-UniRule"/>
</dbReference>
<dbReference type="GO" id="GO:0005829">
    <property type="term" value="C:cytosol"/>
    <property type="evidence" value="ECO:0007669"/>
    <property type="project" value="TreeGrafter"/>
</dbReference>
<dbReference type="GO" id="GO:0003677">
    <property type="term" value="F:DNA binding"/>
    <property type="evidence" value="ECO:0007669"/>
    <property type="project" value="UniProtKB-UniRule"/>
</dbReference>
<dbReference type="FunFam" id="3.30.1310.10:FF:000001">
    <property type="entry name" value="Nucleoid-associated protein YbaB"/>
    <property type="match status" value="1"/>
</dbReference>
<dbReference type="Gene3D" id="3.30.1310.10">
    <property type="entry name" value="Nucleoid-associated protein YbaB-like domain"/>
    <property type="match status" value="1"/>
</dbReference>
<dbReference type="HAMAP" id="MF_00274">
    <property type="entry name" value="DNA_YbaB_EbfC"/>
    <property type="match status" value="1"/>
</dbReference>
<dbReference type="InterPro" id="IPR036894">
    <property type="entry name" value="YbaB-like_sf"/>
</dbReference>
<dbReference type="InterPro" id="IPR004401">
    <property type="entry name" value="YbaB/EbfC"/>
</dbReference>
<dbReference type="NCBIfam" id="TIGR00103">
    <property type="entry name" value="DNA_YbaB_EbfC"/>
    <property type="match status" value="1"/>
</dbReference>
<dbReference type="PANTHER" id="PTHR33449">
    <property type="entry name" value="NUCLEOID-ASSOCIATED PROTEIN YBAB"/>
    <property type="match status" value="1"/>
</dbReference>
<dbReference type="PANTHER" id="PTHR33449:SF1">
    <property type="entry name" value="NUCLEOID-ASSOCIATED PROTEIN YBAB"/>
    <property type="match status" value="1"/>
</dbReference>
<dbReference type="Pfam" id="PF02575">
    <property type="entry name" value="YbaB_DNA_bd"/>
    <property type="match status" value="1"/>
</dbReference>
<dbReference type="PIRSF" id="PIRSF004555">
    <property type="entry name" value="UCP004555"/>
    <property type="match status" value="1"/>
</dbReference>
<dbReference type="SUPFAM" id="SSF82607">
    <property type="entry name" value="YbaB-like"/>
    <property type="match status" value="1"/>
</dbReference>
<comment type="function">
    <text evidence="1">Binds to DNA and alters its conformation. May be involved in regulation of gene expression, nucleoid organization and DNA protection.</text>
</comment>
<comment type="subunit">
    <text evidence="1">Homodimer.</text>
</comment>
<comment type="subcellular location">
    <subcellularLocation>
        <location evidence="1">Cytoplasm</location>
        <location evidence="1">Nucleoid</location>
    </subcellularLocation>
</comment>
<comment type="similarity">
    <text evidence="1">Belongs to the YbaB/EbfC family.</text>
</comment>
<evidence type="ECO:0000255" key="1">
    <source>
        <dbReference type="HAMAP-Rule" id="MF_00274"/>
    </source>
</evidence>
<evidence type="ECO:0000256" key="2">
    <source>
        <dbReference type="SAM" id="MobiDB-lite"/>
    </source>
</evidence>
<reference key="1">
    <citation type="journal article" date="2010" name="Genome Biol. Evol.">
        <title>Continuing evolution of Burkholderia mallei through genome reduction and large-scale rearrangements.</title>
        <authorList>
            <person name="Losada L."/>
            <person name="Ronning C.M."/>
            <person name="DeShazer D."/>
            <person name="Woods D."/>
            <person name="Fedorova N."/>
            <person name="Kim H.S."/>
            <person name="Shabalina S.A."/>
            <person name="Pearson T.R."/>
            <person name="Brinkac L."/>
            <person name="Tan P."/>
            <person name="Nandi T."/>
            <person name="Crabtree J."/>
            <person name="Badger J."/>
            <person name="Beckstrom-Sternberg S."/>
            <person name="Saqib M."/>
            <person name="Schutzer S.E."/>
            <person name="Keim P."/>
            <person name="Nierman W.C."/>
        </authorList>
    </citation>
    <scope>NUCLEOTIDE SEQUENCE [LARGE SCALE GENOMIC DNA]</scope>
    <source>
        <strain>668</strain>
    </source>
</reference>
<gene>
    <name type="ordered locus">BURPS668_2205</name>
</gene>
<protein>
    <recommendedName>
        <fullName evidence="1">Nucleoid-associated protein BURPS668_2205</fullName>
    </recommendedName>
</protein>
<feature type="chain" id="PRO_1000003708" description="Nucleoid-associated protein BURPS668_2205">
    <location>
        <begin position="1"/>
        <end position="108"/>
    </location>
</feature>
<feature type="region of interest" description="Disordered" evidence="2">
    <location>
        <begin position="84"/>
        <end position="108"/>
    </location>
</feature>
<feature type="compositionally biased region" description="Polar residues" evidence="2">
    <location>
        <begin position="85"/>
        <end position="95"/>
    </location>
</feature>
<feature type="compositionally biased region" description="Pro residues" evidence="2">
    <location>
        <begin position="99"/>
        <end position="108"/>
    </location>
</feature>
<sequence>MMKGQLAGLMKQAQQMQENMKKMQEQLALIEVEGQSGAGLVKVTMTCRNEVRRVAIDPSLLADDKDMLEDLVAAAFNDAVRKAEATSQEKMSGMTSGLPLPPGFKLPF</sequence>
<keyword id="KW-0963">Cytoplasm</keyword>
<keyword id="KW-0238">DNA-binding</keyword>
<accession>A3NA69</accession>